<sequence>MVIQKNWQELIKPNKLQVTAGDDPKRVATVVAEPLERGFGTTLGNSLRRVLLSSLQGAAVTSVQIDGVLHEFSSIPGVREDVTDIVLNIKTIAIRSQTDQPKRMTLRKTGPGLVTAGDIGAVGDIQILNPDLVICTLDDGAEIRMEFTVATGKGYVPAERNRPEDAPIGLIPVDALYSPVTKVSYRVETTREGQDLDKDKLTITLETNGAVSPEDALAYAARIIQDQLQVFVNFEEPRKEEAAPLAPQLPFNPALLKKVDELELSVRSANCLKNDNIVYIGDLIQKSEGEMLRTPNFGRKSLNEIKEVLAGMGLHLGMDVPGWPPENIEDLAKRFEEHY</sequence>
<evidence type="ECO:0000255" key="1">
    <source>
        <dbReference type="HAMAP-Rule" id="MF_00059"/>
    </source>
</evidence>
<accession>B7L0S5</accession>
<feature type="chain" id="PRO_1000196640" description="DNA-directed RNA polymerase subunit alpha">
    <location>
        <begin position="1"/>
        <end position="339"/>
    </location>
</feature>
<feature type="region of interest" description="Alpha N-terminal domain (alpha-NTD)" evidence="1">
    <location>
        <begin position="1"/>
        <end position="235"/>
    </location>
</feature>
<feature type="region of interest" description="Alpha C-terminal domain (alpha-CTD)" evidence="1">
    <location>
        <begin position="251"/>
        <end position="339"/>
    </location>
</feature>
<gene>
    <name evidence="1" type="primary">rpoA</name>
    <name type="ordered locus">Mchl_2454</name>
</gene>
<keyword id="KW-0240">DNA-directed RNA polymerase</keyword>
<keyword id="KW-0548">Nucleotidyltransferase</keyword>
<keyword id="KW-0804">Transcription</keyword>
<keyword id="KW-0808">Transferase</keyword>
<organism>
    <name type="scientific">Methylorubrum extorquens (strain CM4 / NCIMB 13688)</name>
    <name type="common">Methylobacterium extorquens</name>
    <dbReference type="NCBI Taxonomy" id="440085"/>
    <lineage>
        <taxon>Bacteria</taxon>
        <taxon>Pseudomonadati</taxon>
        <taxon>Pseudomonadota</taxon>
        <taxon>Alphaproteobacteria</taxon>
        <taxon>Hyphomicrobiales</taxon>
        <taxon>Methylobacteriaceae</taxon>
        <taxon>Methylorubrum</taxon>
    </lineage>
</organism>
<reference key="1">
    <citation type="submission" date="2008-12" db="EMBL/GenBank/DDBJ databases">
        <title>Complete sequence of chromosome of Methylobacterium chloromethanicum CM4.</title>
        <authorList>
            <consortium name="US DOE Joint Genome Institute"/>
            <person name="Lucas S."/>
            <person name="Copeland A."/>
            <person name="Lapidus A."/>
            <person name="Glavina del Rio T."/>
            <person name="Dalin E."/>
            <person name="Tice H."/>
            <person name="Bruce D."/>
            <person name="Goodwin L."/>
            <person name="Pitluck S."/>
            <person name="Chertkov O."/>
            <person name="Brettin T."/>
            <person name="Detter J.C."/>
            <person name="Han C."/>
            <person name="Larimer F."/>
            <person name="Land M."/>
            <person name="Hauser L."/>
            <person name="Kyrpides N."/>
            <person name="Mikhailova N."/>
            <person name="Marx C."/>
            <person name="Richardson P."/>
        </authorList>
    </citation>
    <scope>NUCLEOTIDE SEQUENCE [LARGE SCALE GENOMIC DNA]</scope>
    <source>
        <strain>CM4 / NCIMB 13688</strain>
    </source>
</reference>
<name>RPOA_METC4</name>
<protein>
    <recommendedName>
        <fullName evidence="1">DNA-directed RNA polymerase subunit alpha</fullName>
        <shortName evidence="1">RNAP subunit alpha</shortName>
        <ecNumber evidence="1">2.7.7.6</ecNumber>
    </recommendedName>
    <alternativeName>
        <fullName evidence="1">RNA polymerase subunit alpha</fullName>
    </alternativeName>
    <alternativeName>
        <fullName evidence="1">Transcriptase subunit alpha</fullName>
    </alternativeName>
</protein>
<comment type="function">
    <text evidence="1">DNA-dependent RNA polymerase catalyzes the transcription of DNA into RNA using the four ribonucleoside triphosphates as substrates.</text>
</comment>
<comment type="catalytic activity">
    <reaction evidence="1">
        <text>RNA(n) + a ribonucleoside 5'-triphosphate = RNA(n+1) + diphosphate</text>
        <dbReference type="Rhea" id="RHEA:21248"/>
        <dbReference type="Rhea" id="RHEA-COMP:14527"/>
        <dbReference type="Rhea" id="RHEA-COMP:17342"/>
        <dbReference type="ChEBI" id="CHEBI:33019"/>
        <dbReference type="ChEBI" id="CHEBI:61557"/>
        <dbReference type="ChEBI" id="CHEBI:140395"/>
        <dbReference type="EC" id="2.7.7.6"/>
    </reaction>
</comment>
<comment type="subunit">
    <text evidence="1">Homodimer. The RNAP catalytic core consists of 2 alpha, 1 beta, 1 beta' and 1 omega subunit. When a sigma factor is associated with the core the holoenzyme is formed, which can initiate transcription.</text>
</comment>
<comment type="domain">
    <text evidence="1">The N-terminal domain is essential for RNAP assembly and basal transcription, whereas the C-terminal domain is involved in interaction with transcriptional regulators and with upstream promoter elements.</text>
</comment>
<comment type="similarity">
    <text evidence="1">Belongs to the RNA polymerase alpha chain family.</text>
</comment>
<dbReference type="EC" id="2.7.7.6" evidence="1"/>
<dbReference type="EMBL" id="CP001298">
    <property type="protein sequence ID" value="ACK83296.1"/>
    <property type="molecule type" value="Genomic_DNA"/>
</dbReference>
<dbReference type="RefSeq" id="WP_015950883.1">
    <property type="nucleotide sequence ID" value="NC_011757.1"/>
</dbReference>
<dbReference type="SMR" id="B7L0S5"/>
<dbReference type="KEGG" id="mch:Mchl_2454"/>
<dbReference type="HOGENOM" id="CLU_053084_0_0_5"/>
<dbReference type="Proteomes" id="UP000002385">
    <property type="component" value="Chromosome"/>
</dbReference>
<dbReference type="GO" id="GO:0005737">
    <property type="term" value="C:cytoplasm"/>
    <property type="evidence" value="ECO:0007669"/>
    <property type="project" value="UniProtKB-ARBA"/>
</dbReference>
<dbReference type="GO" id="GO:0000428">
    <property type="term" value="C:DNA-directed RNA polymerase complex"/>
    <property type="evidence" value="ECO:0007669"/>
    <property type="project" value="UniProtKB-KW"/>
</dbReference>
<dbReference type="GO" id="GO:0003677">
    <property type="term" value="F:DNA binding"/>
    <property type="evidence" value="ECO:0007669"/>
    <property type="project" value="UniProtKB-UniRule"/>
</dbReference>
<dbReference type="GO" id="GO:0003899">
    <property type="term" value="F:DNA-directed RNA polymerase activity"/>
    <property type="evidence" value="ECO:0007669"/>
    <property type="project" value="UniProtKB-UniRule"/>
</dbReference>
<dbReference type="GO" id="GO:0046983">
    <property type="term" value="F:protein dimerization activity"/>
    <property type="evidence" value="ECO:0007669"/>
    <property type="project" value="InterPro"/>
</dbReference>
<dbReference type="GO" id="GO:0006351">
    <property type="term" value="P:DNA-templated transcription"/>
    <property type="evidence" value="ECO:0007669"/>
    <property type="project" value="UniProtKB-UniRule"/>
</dbReference>
<dbReference type="CDD" id="cd06928">
    <property type="entry name" value="RNAP_alpha_NTD"/>
    <property type="match status" value="1"/>
</dbReference>
<dbReference type="FunFam" id="1.10.150.20:FF:000001">
    <property type="entry name" value="DNA-directed RNA polymerase subunit alpha"/>
    <property type="match status" value="1"/>
</dbReference>
<dbReference type="FunFam" id="2.170.120.12:FF:000001">
    <property type="entry name" value="DNA-directed RNA polymerase subunit alpha"/>
    <property type="match status" value="1"/>
</dbReference>
<dbReference type="Gene3D" id="1.10.150.20">
    <property type="entry name" value="5' to 3' exonuclease, C-terminal subdomain"/>
    <property type="match status" value="1"/>
</dbReference>
<dbReference type="Gene3D" id="2.170.120.12">
    <property type="entry name" value="DNA-directed RNA polymerase, insert domain"/>
    <property type="match status" value="1"/>
</dbReference>
<dbReference type="Gene3D" id="3.30.1360.10">
    <property type="entry name" value="RNA polymerase, RBP11-like subunit"/>
    <property type="match status" value="1"/>
</dbReference>
<dbReference type="HAMAP" id="MF_00059">
    <property type="entry name" value="RNApol_bact_RpoA"/>
    <property type="match status" value="1"/>
</dbReference>
<dbReference type="InterPro" id="IPR011262">
    <property type="entry name" value="DNA-dir_RNA_pol_insert"/>
</dbReference>
<dbReference type="InterPro" id="IPR011263">
    <property type="entry name" value="DNA-dir_RNA_pol_RpoA/D/Rpb3"/>
</dbReference>
<dbReference type="InterPro" id="IPR011773">
    <property type="entry name" value="DNA-dir_RpoA"/>
</dbReference>
<dbReference type="InterPro" id="IPR036603">
    <property type="entry name" value="RBP11-like"/>
</dbReference>
<dbReference type="InterPro" id="IPR011260">
    <property type="entry name" value="RNAP_asu_C"/>
</dbReference>
<dbReference type="InterPro" id="IPR036643">
    <property type="entry name" value="RNApol_insert_sf"/>
</dbReference>
<dbReference type="NCBIfam" id="NF003513">
    <property type="entry name" value="PRK05182.1-2"/>
    <property type="match status" value="1"/>
</dbReference>
<dbReference type="NCBIfam" id="NF003519">
    <property type="entry name" value="PRK05182.2-5"/>
    <property type="match status" value="1"/>
</dbReference>
<dbReference type="NCBIfam" id="TIGR02027">
    <property type="entry name" value="rpoA"/>
    <property type="match status" value="1"/>
</dbReference>
<dbReference type="Pfam" id="PF01000">
    <property type="entry name" value="RNA_pol_A_bac"/>
    <property type="match status" value="1"/>
</dbReference>
<dbReference type="Pfam" id="PF03118">
    <property type="entry name" value="RNA_pol_A_CTD"/>
    <property type="match status" value="1"/>
</dbReference>
<dbReference type="Pfam" id="PF01193">
    <property type="entry name" value="RNA_pol_L"/>
    <property type="match status" value="1"/>
</dbReference>
<dbReference type="SMART" id="SM00662">
    <property type="entry name" value="RPOLD"/>
    <property type="match status" value="1"/>
</dbReference>
<dbReference type="SUPFAM" id="SSF47789">
    <property type="entry name" value="C-terminal domain of RNA polymerase alpha subunit"/>
    <property type="match status" value="1"/>
</dbReference>
<dbReference type="SUPFAM" id="SSF56553">
    <property type="entry name" value="Insert subdomain of RNA polymerase alpha subunit"/>
    <property type="match status" value="1"/>
</dbReference>
<dbReference type="SUPFAM" id="SSF55257">
    <property type="entry name" value="RBP11-like subunits of RNA polymerase"/>
    <property type="match status" value="1"/>
</dbReference>
<proteinExistence type="inferred from homology"/>